<sequence>MAKLHDYYKDEVIKQLMSQFDYNSVMQVPRVEKITLNMGVGEAIADKKLLDNAAADLAAISGQKPLITKARKSVAGFKIRQGYPIGCKVTLRGERMWEFFERLISIAVPRIRDFRGLSAKSFDGRGNYSMGVREQIIFPEIDYDKVDRVRGLDITITTTAKSDDEGRALLAAFNFPFRK</sequence>
<evidence type="ECO:0000255" key="1">
    <source>
        <dbReference type="HAMAP-Rule" id="MF_01333"/>
    </source>
</evidence>
<evidence type="ECO:0000305" key="2"/>
<accession>P46178</accession>
<protein>
    <recommendedName>
        <fullName evidence="1">Large ribosomal subunit protein uL5</fullName>
    </recommendedName>
    <alternativeName>
        <fullName evidence="2">50S ribosomal protein L5</fullName>
    </alternativeName>
</protein>
<name>RL5_BUCAK</name>
<proteinExistence type="inferred from homology"/>
<dbReference type="EMBL" id="D31786">
    <property type="protein sequence ID" value="BAA06587.1"/>
    <property type="molecule type" value="Genomic_DNA"/>
</dbReference>
<dbReference type="SMR" id="P46178"/>
<dbReference type="GO" id="GO:1990904">
    <property type="term" value="C:ribonucleoprotein complex"/>
    <property type="evidence" value="ECO:0007669"/>
    <property type="project" value="UniProtKB-KW"/>
</dbReference>
<dbReference type="GO" id="GO:0005840">
    <property type="term" value="C:ribosome"/>
    <property type="evidence" value="ECO:0007669"/>
    <property type="project" value="UniProtKB-KW"/>
</dbReference>
<dbReference type="GO" id="GO:0019843">
    <property type="term" value="F:rRNA binding"/>
    <property type="evidence" value="ECO:0007669"/>
    <property type="project" value="UniProtKB-UniRule"/>
</dbReference>
<dbReference type="GO" id="GO:0003735">
    <property type="term" value="F:structural constituent of ribosome"/>
    <property type="evidence" value="ECO:0007669"/>
    <property type="project" value="InterPro"/>
</dbReference>
<dbReference type="GO" id="GO:0000049">
    <property type="term" value="F:tRNA binding"/>
    <property type="evidence" value="ECO:0007669"/>
    <property type="project" value="UniProtKB-UniRule"/>
</dbReference>
<dbReference type="GO" id="GO:0006412">
    <property type="term" value="P:translation"/>
    <property type="evidence" value="ECO:0007669"/>
    <property type="project" value="UniProtKB-UniRule"/>
</dbReference>
<dbReference type="FunFam" id="3.30.1440.10:FF:000001">
    <property type="entry name" value="50S ribosomal protein L5"/>
    <property type="match status" value="1"/>
</dbReference>
<dbReference type="Gene3D" id="3.30.1440.10">
    <property type="match status" value="1"/>
</dbReference>
<dbReference type="HAMAP" id="MF_01333_B">
    <property type="entry name" value="Ribosomal_uL5_B"/>
    <property type="match status" value="1"/>
</dbReference>
<dbReference type="InterPro" id="IPR002132">
    <property type="entry name" value="Ribosomal_uL5"/>
</dbReference>
<dbReference type="InterPro" id="IPR020930">
    <property type="entry name" value="Ribosomal_uL5_bac-type"/>
</dbReference>
<dbReference type="InterPro" id="IPR031309">
    <property type="entry name" value="Ribosomal_uL5_C"/>
</dbReference>
<dbReference type="InterPro" id="IPR020929">
    <property type="entry name" value="Ribosomal_uL5_CS"/>
</dbReference>
<dbReference type="InterPro" id="IPR022803">
    <property type="entry name" value="Ribosomal_uL5_dom_sf"/>
</dbReference>
<dbReference type="InterPro" id="IPR031310">
    <property type="entry name" value="Ribosomal_uL5_N"/>
</dbReference>
<dbReference type="NCBIfam" id="NF000585">
    <property type="entry name" value="PRK00010.1"/>
    <property type="match status" value="1"/>
</dbReference>
<dbReference type="PANTHER" id="PTHR11994">
    <property type="entry name" value="60S RIBOSOMAL PROTEIN L11-RELATED"/>
    <property type="match status" value="1"/>
</dbReference>
<dbReference type="Pfam" id="PF00281">
    <property type="entry name" value="Ribosomal_L5"/>
    <property type="match status" value="1"/>
</dbReference>
<dbReference type="Pfam" id="PF00673">
    <property type="entry name" value="Ribosomal_L5_C"/>
    <property type="match status" value="1"/>
</dbReference>
<dbReference type="PIRSF" id="PIRSF002161">
    <property type="entry name" value="Ribosomal_L5"/>
    <property type="match status" value="1"/>
</dbReference>
<dbReference type="SUPFAM" id="SSF55282">
    <property type="entry name" value="RL5-like"/>
    <property type="match status" value="1"/>
</dbReference>
<dbReference type="PROSITE" id="PS00358">
    <property type="entry name" value="RIBOSOMAL_L5"/>
    <property type="match status" value="1"/>
</dbReference>
<keyword id="KW-0687">Ribonucleoprotein</keyword>
<keyword id="KW-0689">Ribosomal protein</keyword>
<keyword id="KW-0694">RNA-binding</keyword>
<keyword id="KW-0699">rRNA-binding</keyword>
<keyword id="KW-0820">tRNA-binding</keyword>
<organism>
    <name type="scientific">Buchnera aphidicola subsp. Acyrthosiphon kondoi</name>
    <name type="common">Acyrthosiphon kondoi symbiotic bacterium</name>
    <dbReference type="NCBI Taxonomy" id="42474"/>
    <lineage>
        <taxon>Bacteria</taxon>
        <taxon>Pseudomonadati</taxon>
        <taxon>Pseudomonadota</taxon>
        <taxon>Gammaproteobacteria</taxon>
        <taxon>Enterobacterales</taxon>
        <taxon>Erwiniaceae</taxon>
        <taxon>Buchnera</taxon>
    </lineage>
</organism>
<feature type="chain" id="PRO_0000124904" description="Large ribosomal subunit protein uL5">
    <location>
        <begin position="1"/>
        <end position="179"/>
    </location>
</feature>
<gene>
    <name evidence="1" type="primary">rplE</name>
</gene>
<comment type="function">
    <text evidence="1">This is one of the proteins that bind and probably mediate the attachment of the 5S RNA into the large ribosomal subunit, where it forms part of the central protuberance. In the 70S ribosome it contacts protein S13 of the 30S subunit (bridge B1b), connecting the 2 subunits; this bridge is implicated in subunit movement. Contacts the P site tRNA; the 5S rRNA and some of its associated proteins might help stabilize positioning of ribosome-bound tRNAs.</text>
</comment>
<comment type="subunit">
    <text evidence="1">Part of the 50S ribosomal subunit; part of the 5S rRNA/L5/L18/L25 subcomplex. Contacts the 5S rRNA and the P site tRNA. Forms a bridge to the 30S subunit in the 70S ribosome.</text>
</comment>
<comment type="similarity">
    <text evidence="1">Belongs to the universal ribosomal protein uL5 family.</text>
</comment>
<reference key="1">
    <citation type="journal article" date="1994" name="DNA Res.">
        <title>Cloning and characterization of the ribosomal protein genes in the spc operon of a prokaryotic endosymbiont of the pea aphid, Acyrthosiphon kondoi.</title>
        <authorList>
            <person name="Abe R."/>
            <person name="Yamashita A."/>
            <person name="Isono K."/>
        </authorList>
    </citation>
    <scope>NUCLEOTIDE SEQUENCE [GENOMIC DNA]</scope>
    <source>
        <strain>Kurashiki</strain>
    </source>
</reference>